<reference key="1">
    <citation type="journal article" date="2005" name="J. Bacteriol.">
        <title>Insights on evolution of virulence and resistance from the complete genome analysis of an early methicillin-resistant Staphylococcus aureus strain and a biofilm-producing methicillin-resistant Staphylococcus epidermidis strain.</title>
        <authorList>
            <person name="Gill S.R."/>
            <person name="Fouts D.E."/>
            <person name="Archer G.L."/>
            <person name="Mongodin E.F."/>
            <person name="DeBoy R.T."/>
            <person name="Ravel J."/>
            <person name="Paulsen I.T."/>
            <person name="Kolonay J.F."/>
            <person name="Brinkac L.M."/>
            <person name="Beanan M.J."/>
            <person name="Dodson R.J."/>
            <person name="Daugherty S.C."/>
            <person name="Madupu R."/>
            <person name="Angiuoli S.V."/>
            <person name="Durkin A.S."/>
            <person name="Haft D.H."/>
            <person name="Vamathevan J.J."/>
            <person name="Khouri H."/>
            <person name="Utterback T.R."/>
            <person name="Lee C."/>
            <person name="Dimitrov G."/>
            <person name="Jiang L."/>
            <person name="Qin H."/>
            <person name="Weidman J."/>
            <person name="Tran K."/>
            <person name="Kang K.H."/>
            <person name="Hance I.R."/>
            <person name="Nelson K.E."/>
            <person name="Fraser C.M."/>
        </authorList>
    </citation>
    <scope>NUCLEOTIDE SEQUENCE [LARGE SCALE GENOMIC DNA]</scope>
    <source>
        <strain>ATCC 35984 / DSM 28319 / BCRC 17069 / CCUG 31568 / BM 3577 / RP62A</strain>
    </source>
</reference>
<keyword id="KW-0067">ATP-binding</keyword>
<keyword id="KW-1003">Cell membrane</keyword>
<keyword id="KW-0472">Membrane</keyword>
<keyword id="KW-0547">Nucleotide-binding</keyword>
<keyword id="KW-1185">Reference proteome</keyword>
<keyword id="KW-1278">Translocase</keyword>
<keyword id="KW-0813">Transport</keyword>
<organism>
    <name type="scientific">Staphylococcus epidermidis (strain ATCC 35984 / DSM 28319 / BCRC 17069 / CCUG 31568 / BM 3577 / RP62A)</name>
    <dbReference type="NCBI Taxonomy" id="176279"/>
    <lineage>
        <taxon>Bacteria</taxon>
        <taxon>Bacillati</taxon>
        <taxon>Bacillota</taxon>
        <taxon>Bacilli</taxon>
        <taxon>Bacillales</taxon>
        <taxon>Staphylococcaceae</taxon>
        <taxon>Staphylococcus</taxon>
    </lineage>
</organism>
<evidence type="ECO:0000255" key="1">
    <source>
        <dbReference type="HAMAP-Rule" id="MF_01726"/>
    </source>
</evidence>
<comment type="function">
    <text evidence="1">Part of the ABC transporter complex PotABCD involved in spermidine/putrescine import. Responsible for energy coupling to the transport system.</text>
</comment>
<comment type="catalytic activity">
    <reaction evidence="1">
        <text>ATP + H2O + polyamine-[polyamine-binding protein]Side 1 = ADP + phosphate + polyamineSide 2 + [polyamine-binding protein]Side 1.</text>
        <dbReference type="EC" id="7.6.2.11"/>
    </reaction>
</comment>
<comment type="subunit">
    <text evidence="1">The complex is composed of two ATP-binding proteins (PotA), two transmembrane proteins (PotB and PotC) and a solute-binding protein (PotD).</text>
</comment>
<comment type="subcellular location">
    <subcellularLocation>
        <location evidence="1">Cell membrane</location>
        <topology evidence="1">Peripheral membrane protein</topology>
    </subcellularLocation>
</comment>
<comment type="similarity">
    <text evidence="1">Belongs to the ABC transporter superfamily. Spermidine/putrescine importer (TC 3.A.1.11.1) family.</text>
</comment>
<proteinExistence type="inferred from homology"/>
<protein>
    <recommendedName>
        <fullName evidence="1">Spermidine/putrescine import ATP-binding protein PotA</fullName>
        <ecNumber evidence="1">7.6.2.11</ecNumber>
    </recommendedName>
</protein>
<sequence length="364" mass="41486">MNPLLSFKDVSKGFEDVQILNEINIDIEPGYFYTLLGPSGCGKTTILKLIAGFEYPDSGDIIYKDKPIGKMPPNKRKVNTVFQDYALFPHLNVFDNIAYGLKLKKLSKSEIKRKVTEALQLVKLSGYEHRQIQGMSGGQKQRVAIARAIVNEPEILLLDESLSALDLKLRTEMQYLLRELQSRLGITFIFVTHDQEEALALSDYIFVMKDGKIQQFGTPIDIYDEPVNRFVADFIGESNIVHGTMVEDFVVNIYGQNFDCVDMGIKENKKVEVVIRPEDISLVSQNDGLFKAKVDSMLFRGVHYEICCKDRKGYEWVIQSTKKANVGSEVGLYFEPEAIHIMVPGETEEEFDKRIESYEDYHHA</sequence>
<accession>Q5HQ70</accession>
<name>POTA_STAEQ</name>
<feature type="chain" id="PRO_0000286295" description="Spermidine/putrescine import ATP-binding protein PotA">
    <location>
        <begin position="1"/>
        <end position="364"/>
    </location>
</feature>
<feature type="domain" description="ABC transporter" evidence="1">
    <location>
        <begin position="5"/>
        <end position="235"/>
    </location>
</feature>
<feature type="binding site" evidence="1">
    <location>
        <begin position="37"/>
        <end position="44"/>
    </location>
    <ligand>
        <name>ATP</name>
        <dbReference type="ChEBI" id="CHEBI:30616"/>
    </ligand>
</feature>
<dbReference type="EC" id="7.6.2.11" evidence="1"/>
<dbReference type="EMBL" id="CP000029">
    <property type="protein sequence ID" value="AAW54065.1"/>
    <property type="molecule type" value="Genomic_DNA"/>
</dbReference>
<dbReference type="RefSeq" id="WP_002456615.1">
    <property type="nucleotide sequence ID" value="NC_002976.3"/>
</dbReference>
<dbReference type="SMR" id="Q5HQ70"/>
<dbReference type="STRING" id="176279.SERP0686"/>
<dbReference type="KEGG" id="ser:SERP0686"/>
<dbReference type="eggNOG" id="COG3842">
    <property type="taxonomic scope" value="Bacteria"/>
</dbReference>
<dbReference type="HOGENOM" id="CLU_000604_1_1_9"/>
<dbReference type="Proteomes" id="UP000000531">
    <property type="component" value="Chromosome"/>
</dbReference>
<dbReference type="GO" id="GO:0043190">
    <property type="term" value="C:ATP-binding cassette (ABC) transporter complex"/>
    <property type="evidence" value="ECO:0007669"/>
    <property type="project" value="InterPro"/>
</dbReference>
<dbReference type="GO" id="GO:0015594">
    <property type="term" value="F:ABC-type putrescine transporter activity"/>
    <property type="evidence" value="ECO:0007669"/>
    <property type="project" value="InterPro"/>
</dbReference>
<dbReference type="GO" id="GO:0005524">
    <property type="term" value="F:ATP binding"/>
    <property type="evidence" value="ECO:0007669"/>
    <property type="project" value="UniProtKB-KW"/>
</dbReference>
<dbReference type="GO" id="GO:0016887">
    <property type="term" value="F:ATP hydrolysis activity"/>
    <property type="evidence" value="ECO:0007669"/>
    <property type="project" value="InterPro"/>
</dbReference>
<dbReference type="CDD" id="cd03300">
    <property type="entry name" value="ABC_PotA_N"/>
    <property type="match status" value="1"/>
</dbReference>
<dbReference type="FunFam" id="3.40.50.300:FF:000425">
    <property type="entry name" value="Probable ABC transporter, ATP-binding subunit"/>
    <property type="match status" value="1"/>
</dbReference>
<dbReference type="Gene3D" id="2.40.50.100">
    <property type="match status" value="1"/>
</dbReference>
<dbReference type="Gene3D" id="3.40.50.300">
    <property type="entry name" value="P-loop containing nucleotide triphosphate hydrolases"/>
    <property type="match status" value="1"/>
</dbReference>
<dbReference type="InterPro" id="IPR003593">
    <property type="entry name" value="AAA+_ATPase"/>
</dbReference>
<dbReference type="InterPro" id="IPR050093">
    <property type="entry name" value="ABC_SmlMolc_Importer"/>
</dbReference>
<dbReference type="InterPro" id="IPR003439">
    <property type="entry name" value="ABC_transporter-like_ATP-bd"/>
</dbReference>
<dbReference type="InterPro" id="IPR017871">
    <property type="entry name" value="ABC_transporter-like_CS"/>
</dbReference>
<dbReference type="InterPro" id="IPR008995">
    <property type="entry name" value="Mo/tungstate-bd_C_term_dom"/>
</dbReference>
<dbReference type="InterPro" id="IPR027417">
    <property type="entry name" value="P-loop_NTPase"/>
</dbReference>
<dbReference type="InterPro" id="IPR005893">
    <property type="entry name" value="PotA-like"/>
</dbReference>
<dbReference type="InterPro" id="IPR017879">
    <property type="entry name" value="PotA_ATP-bd"/>
</dbReference>
<dbReference type="InterPro" id="IPR013611">
    <property type="entry name" value="Transp-assoc_OB_typ2"/>
</dbReference>
<dbReference type="NCBIfam" id="TIGR01187">
    <property type="entry name" value="potA"/>
    <property type="match status" value="1"/>
</dbReference>
<dbReference type="PANTHER" id="PTHR42781">
    <property type="entry name" value="SPERMIDINE/PUTRESCINE IMPORT ATP-BINDING PROTEIN POTA"/>
    <property type="match status" value="1"/>
</dbReference>
<dbReference type="PANTHER" id="PTHR42781:SF4">
    <property type="entry name" value="SPERMIDINE_PUTRESCINE IMPORT ATP-BINDING PROTEIN POTA"/>
    <property type="match status" value="1"/>
</dbReference>
<dbReference type="Pfam" id="PF00005">
    <property type="entry name" value="ABC_tran"/>
    <property type="match status" value="1"/>
</dbReference>
<dbReference type="Pfam" id="PF08402">
    <property type="entry name" value="TOBE_2"/>
    <property type="match status" value="1"/>
</dbReference>
<dbReference type="SMART" id="SM00382">
    <property type="entry name" value="AAA"/>
    <property type="match status" value="1"/>
</dbReference>
<dbReference type="SUPFAM" id="SSF50331">
    <property type="entry name" value="MOP-like"/>
    <property type="match status" value="1"/>
</dbReference>
<dbReference type="SUPFAM" id="SSF52540">
    <property type="entry name" value="P-loop containing nucleoside triphosphate hydrolases"/>
    <property type="match status" value="1"/>
</dbReference>
<dbReference type="PROSITE" id="PS00211">
    <property type="entry name" value="ABC_TRANSPORTER_1"/>
    <property type="match status" value="1"/>
</dbReference>
<dbReference type="PROSITE" id="PS50893">
    <property type="entry name" value="ABC_TRANSPORTER_2"/>
    <property type="match status" value="1"/>
</dbReference>
<dbReference type="PROSITE" id="PS51305">
    <property type="entry name" value="POTA"/>
    <property type="match status" value="1"/>
</dbReference>
<gene>
    <name evidence="1" type="primary">potA</name>
    <name type="ordered locus">SERP0686</name>
</gene>